<reference key="1">
    <citation type="submission" date="1999-03" db="UniProtKB">
        <authorList>
            <person name="Lopez de Felipe F."/>
        </authorList>
    </citation>
    <scope>PROTEIN SEQUENCE</scope>
    <source>
        <strain>IFPL731</strain>
    </source>
</reference>
<proteinExistence type="evidence at protein level"/>
<protein>
    <recommendedName>
        <fullName>Putative esterase/lipase</fullName>
        <ecNumber>3.1.-.-</ecNumber>
    </recommendedName>
</protein>
<name>ESL_LACCA</name>
<accession>P81758</accession>
<sequence>SIITDVLAXE</sequence>
<organism>
    <name type="scientific">Lacticaseibacillus casei</name>
    <name type="common">Lactobacillus casei</name>
    <dbReference type="NCBI Taxonomy" id="1582"/>
    <lineage>
        <taxon>Bacteria</taxon>
        <taxon>Bacillati</taxon>
        <taxon>Bacillota</taxon>
        <taxon>Bacilli</taxon>
        <taxon>Lactobacillales</taxon>
        <taxon>Lactobacillaceae</taxon>
        <taxon>Lacticaseibacillus</taxon>
    </lineage>
</organism>
<feature type="chain" id="PRO_0000087057" description="Putative esterase/lipase">
    <location>
        <begin position="1"/>
        <end position="10" status="greater than"/>
    </location>
</feature>
<feature type="non-terminal residue">
    <location>
        <position position="10"/>
    </location>
</feature>
<keyword id="KW-0903">Direct protein sequencing</keyword>
<keyword id="KW-0378">Hydrolase</keyword>
<keyword id="KW-0719">Serine esterase</keyword>
<dbReference type="EC" id="3.1.-.-"/>
<dbReference type="GO" id="GO:0052689">
    <property type="term" value="F:carboxylic ester hydrolase activity"/>
    <property type="evidence" value="ECO:0007669"/>
    <property type="project" value="UniProtKB-KW"/>
</dbReference>